<comment type="function">
    <text evidence="1">Catalyzes the anti-1,4-elimination of the C-3 phosphate and the C-6 proR hydrogen from 5-enolpyruvylshikimate-3-phosphate (EPSP) to yield chorismate, which is the branch point compound that serves as the starting substrate for the three terminal pathways of aromatic amino acid biosynthesis. This reaction introduces a second double bond into the aromatic ring system.</text>
</comment>
<comment type="catalytic activity">
    <reaction evidence="1">
        <text>5-O-(1-carboxyvinyl)-3-phosphoshikimate = chorismate + phosphate</text>
        <dbReference type="Rhea" id="RHEA:21020"/>
        <dbReference type="ChEBI" id="CHEBI:29748"/>
        <dbReference type="ChEBI" id="CHEBI:43474"/>
        <dbReference type="ChEBI" id="CHEBI:57701"/>
        <dbReference type="EC" id="4.2.3.5"/>
    </reaction>
</comment>
<comment type="cofactor">
    <cofactor evidence="1">
        <name>FMNH2</name>
        <dbReference type="ChEBI" id="CHEBI:57618"/>
    </cofactor>
    <text evidence="1">Reduced FMN (FMNH(2)).</text>
</comment>
<comment type="pathway">
    <text evidence="1">Metabolic intermediate biosynthesis; chorismate biosynthesis; chorismate from D-erythrose 4-phosphate and phosphoenolpyruvate: step 7/7.</text>
</comment>
<comment type="subunit">
    <text evidence="1">Homotetramer.</text>
</comment>
<comment type="similarity">
    <text evidence="1">Belongs to the chorismate synthase family.</text>
</comment>
<keyword id="KW-0028">Amino-acid biosynthesis</keyword>
<keyword id="KW-0057">Aromatic amino acid biosynthesis</keyword>
<keyword id="KW-0274">FAD</keyword>
<keyword id="KW-0285">Flavoprotein</keyword>
<keyword id="KW-0288">FMN</keyword>
<keyword id="KW-0456">Lyase</keyword>
<keyword id="KW-0521">NADP</keyword>
<accession>B0SHV8</accession>
<dbReference type="EC" id="4.2.3.5" evidence="1"/>
<dbReference type="EMBL" id="CP000777">
    <property type="protein sequence ID" value="ABZ95759.1"/>
    <property type="molecule type" value="Genomic_DNA"/>
</dbReference>
<dbReference type="RefSeq" id="WP_012390326.1">
    <property type="nucleotide sequence ID" value="NC_010842.1"/>
</dbReference>
<dbReference type="SMR" id="B0SHV8"/>
<dbReference type="KEGG" id="lbf:LBF_3292"/>
<dbReference type="HOGENOM" id="CLU_034547_0_1_12"/>
<dbReference type="UniPathway" id="UPA00053">
    <property type="reaction ID" value="UER00090"/>
</dbReference>
<dbReference type="GO" id="GO:0005829">
    <property type="term" value="C:cytosol"/>
    <property type="evidence" value="ECO:0007669"/>
    <property type="project" value="TreeGrafter"/>
</dbReference>
<dbReference type="GO" id="GO:0004107">
    <property type="term" value="F:chorismate synthase activity"/>
    <property type="evidence" value="ECO:0007669"/>
    <property type="project" value="UniProtKB-UniRule"/>
</dbReference>
<dbReference type="GO" id="GO:0010181">
    <property type="term" value="F:FMN binding"/>
    <property type="evidence" value="ECO:0007669"/>
    <property type="project" value="TreeGrafter"/>
</dbReference>
<dbReference type="GO" id="GO:0008652">
    <property type="term" value="P:amino acid biosynthetic process"/>
    <property type="evidence" value="ECO:0007669"/>
    <property type="project" value="UniProtKB-KW"/>
</dbReference>
<dbReference type="GO" id="GO:0009073">
    <property type="term" value="P:aromatic amino acid family biosynthetic process"/>
    <property type="evidence" value="ECO:0007669"/>
    <property type="project" value="UniProtKB-KW"/>
</dbReference>
<dbReference type="GO" id="GO:0009423">
    <property type="term" value="P:chorismate biosynthetic process"/>
    <property type="evidence" value="ECO:0007669"/>
    <property type="project" value="UniProtKB-UniRule"/>
</dbReference>
<dbReference type="CDD" id="cd07304">
    <property type="entry name" value="Chorismate_synthase"/>
    <property type="match status" value="1"/>
</dbReference>
<dbReference type="FunFam" id="3.60.150.10:FF:000003">
    <property type="entry name" value="Chorismate synthase"/>
    <property type="match status" value="1"/>
</dbReference>
<dbReference type="Gene3D" id="3.60.150.10">
    <property type="entry name" value="Chorismate synthase AroC"/>
    <property type="match status" value="1"/>
</dbReference>
<dbReference type="HAMAP" id="MF_00300">
    <property type="entry name" value="Chorismate_synth"/>
    <property type="match status" value="1"/>
</dbReference>
<dbReference type="InterPro" id="IPR000453">
    <property type="entry name" value="Chorismate_synth"/>
</dbReference>
<dbReference type="InterPro" id="IPR035904">
    <property type="entry name" value="Chorismate_synth_AroC_sf"/>
</dbReference>
<dbReference type="InterPro" id="IPR020541">
    <property type="entry name" value="Chorismate_synthase_CS"/>
</dbReference>
<dbReference type="NCBIfam" id="TIGR00033">
    <property type="entry name" value="aroC"/>
    <property type="match status" value="1"/>
</dbReference>
<dbReference type="NCBIfam" id="NF003793">
    <property type="entry name" value="PRK05382.1"/>
    <property type="match status" value="1"/>
</dbReference>
<dbReference type="PANTHER" id="PTHR21085">
    <property type="entry name" value="CHORISMATE SYNTHASE"/>
    <property type="match status" value="1"/>
</dbReference>
<dbReference type="PANTHER" id="PTHR21085:SF0">
    <property type="entry name" value="CHORISMATE SYNTHASE"/>
    <property type="match status" value="1"/>
</dbReference>
<dbReference type="Pfam" id="PF01264">
    <property type="entry name" value="Chorismate_synt"/>
    <property type="match status" value="1"/>
</dbReference>
<dbReference type="PIRSF" id="PIRSF001456">
    <property type="entry name" value="Chorismate_synth"/>
    <property type="match status" value="1"/>
</dbReference>
<dbReference type="SUPFAM" id="SSF103263">
    <property type="entry name" value="Chorismate synthase, AroC"/>
    <property type="match status" value="1"/>
</dbReference>
<dbReference type="PROSITE" id="PS00787">
    <property type="entry name" value="CHORISMATE_SYNTHASE_1"/>
    <property type="match status" value="1"/>
</dbReference>
<dbReference type="PROSITE" id="PS00789">
    <property type="entry name" value="CHORISMATE_SYNTHASE_3"/>
    <property type="match status" value="1"/>
</dbReference>
<proteinExistence type="inferred from homology"/>
<sequence>MPSSWGKIFRVSTFGESHGTSVGVVVDGVPAGLPFPEEEIQKDLTRRRPGQNDLTTPRDEKDRMVVESGVFEGKTTGSPILMKVNNQNTIGSDYDEMAHVFRPSHADYTYSEKYGHRAHVGGGRSSVRETIGRVAAAGLARVILENELGISTVGFVDSIGPIDSNITEDEYPISRDLVDQFPTRCPKASANEEMETLIRKLRDEGDSVGGVVKVVVRNLPPGLGDPVYDKLDADLAKAILSISACKGFEVGSGFSGTRQTGSTHNDEFYIEEGTGKVKTRTNRSGGIQGGISNGMDLVIRAAFKPTSTIKKEQKTINDQNKETILKAKGRHDPCVLPRAVPIVEAVVNLVLVDAYLYQRALQPKWFMKYANLNAIPNQ</sequence>
<feature type="chain" id="PRO_1000115363" description="Chorismate synthase">
    <location>
        <begin position="1"/>
        <end position="378"/>
    </location>
</feature>
<feature type="region of interest" description="Disordered" evidence="2">
    <location>
        <begin position="37"/>
        <end position="60"/>
    </location>
</feature>
<feature type="binding site" evidence="1">
    <location>
        <position position="47"/>
    </location>
    <ligand>
        <name>NADP(+)</name>
        <dbReference type="ChEBI" id="CHEBI:58349"/>
    </ligand>
</feature>
<feature type="binding site" evidence="1">
    <location>
        <begin position="124"/>
        <end position="126"/>
    </location>
    <ligand>
        <name>FMN</name>
        <dbReference type="ChEBI" id="CHEBI:58210"/>
    </ligand>
</feature>
<feature type="binding site" evidence="1">
    <location>
        <position position="289"/>
    </location>
    <ligand>
        <name>FMN</name>
        <dbReference type="ChEBI" id="CHEBI:58210"/>
    </ligand>
</feature>
<feature type="binding site" evidence="1">
    <location>
        <begin position="304"/>
        <end position="308"/>
    </location>
    <ligand>
        <name>FMN</name>
        <dbReference type="ChEBI" id="CHEBI:58210"/>
    </ligand>
</feature>
<feature type="binding site" evidence="1">
    <location>
        <position position="330"/>
    </location>
    <ligand>
        <name>FMN</name>
        <dbReference type="ChEBI" id="CHEBI:58210"/>
    </ligand>
</feature>
<protein>
    <recommendedName>
        <fullName evidence="1">Chorismate synthase</fullName>
        <shortName evidence="1">CS</shortName>
        <ecNumber evidence="1">4.2.3.5</ecNumber>
    </recommendedName>
    <alternativeName>
        <fullName evidence="1">5-enolpyruvylshikimate-3-phosphate phospholyase</fullName>
    </alternativeName>
</protein>
<organism>
    <name type="scientific">Leptospira biflexa serovar Patoc (strain Patoc 1 / Ames)</name>
    <dbReference type="NCBI Taxonomy" id="355278"/>
    <lineage>
        <taxon>Bacteria</taxon>
        <taxon>Pseudomonadati</taxon>
        <taxon>Spirochaetota</taxon>
        <taxon>Spirochaetia</taxon>
        <taxon>Leptospirales</taxon>
        <taxon>Leptospiraceae</taxon>
        <taxon>Leptospira</taxon>
    </lineage>
</organism>
<evidence type="ECO:0000255" key="1">
    <source>
        <dbReference type="HAMAP-Rule" id="MF_00300"/>
    </source>
</evidence>
<evidence type="ECO:0000256" key="2">
    <source>
        <dbReference type="SAM" id="MobiDB-lite"/>
    </source>
</evidence>
<name>AROC_LEPBA</name>
<gene>
    <name evidence="1" type="primary">aroC</name>
    <name type="ordered locus">LBF_3292</name>
</gene>
<reference key="1">
    <citation type="journal article" date="2008" name="PLoS ONE">
        <title>Genome sequence of the saprophyte Leptospira biflexa provides insights into the evolution of Leptospira and the pathogenesis of leptospirosis.</title>
        <authorList>
            <person name="Picardeau M."/>
            <person name="Bulach D.M."/>
            <person name="Bouchier C."/>
            <person name="Zuerner R.L."/>
            <person name="Zidane N."/>
            <person name="Wilson P.J."/>
            <person name="Creno S."/>
            <person name="Kuczek E.S."/>
            <person name="Bommezzadri S."/>
            <person name="Davis J.C."/>
            <person name="McGrath A."/>
            <person name="Johnson M.J."/>
            <person name="Boursaux-Eude C."/>
            <person name="Seemann T."/>
            <person name="Rouy Z."/>
            <person name="Coppel R.L."/>
            <person name="Rood J.I."/>
            <person name="Lajus A."/>
            <person name="Davies J.K."/>
            <person name="Medigue C."/>
            <person name="Adler B."/>
        </authorList>
    </citation>
    <scope>NUCLEOTIDE SEQUENCE [LARGE SCALE GENOMIC DNA]</scope>
    <source>
        <strain>Patoc 1 / Ames</strain>
    </source>
</reference>